<geneLocation type="chloroplast"/>
<keyword id="KW-0150">Chloroplast</keyword>
<keyword id="KW-0249">Electron transport</keyword>
<keyword id="KW-0472">Membrane</keyword>
<keyword id="KW-0602">Photosynthesis</keyword>
<keyword id="KW-0934">Plastid</keyword>
<keyword id="KW-0793">Thylakoid</keyword>
<keyword id="KW-0812">Transmembrane</keyword>
<keyword id="KW-1133">Transmembrane helix</keyword>
<keyword id="KW-0813">Transport</keyword>
<dbReference type="EMBL" id="AB240139">
    <property type="protein sequence ID" value="BAE48022.1"/>
    <property type="molecule type" value="Genomic_DNA"/>
</dbReference>
<dbReference type="RefSeq" id="YP_398884.1">
    <property type="nucleotide sequence ID" value="NC_007602.1"/>
</dbReference>
<dbReference type="SMR" id="Q33C13"/>
<dbReference type="GeneID" id="3776359"/>
<dbReference type="KEGG" id="nto:3776359"/>
<dbReference type="OrthoDB" id="35473at2759"/>
<dbReference type="GO" id="GO:0009535">
    <property type="term" value="C:chloroplast thylakoid membrane"/>
    <property type="evidence" value="ECO:0007669"/>
    <property type="project" value="UniProtKB-SubCell"/>
</dbReference>
<dbReference type="GO" id="GO:0009512">
    <property type="term" value="C:cytochrome b6f complex"/>
    <property type="evidence" value="ECO:0007669"/>
    <property type="project" value="InterPro"/>
</dbReference>
<dbReference type="GO" id="GO:0045158">
    <property type="term" value="F:electron transporter, transferring electrons within cytochrome b6/f complex of photosystem II activity"/>
    <property type="evidence" value="ECO:0007669"/>
    <property type="project" value="UniProtKB-UniRule"/>
</dbReference>
<dbReference type="GO" id="GO:0017004">
    <property type="term" value="P:cytochrome complex assembly"/>
    <property type="evidence" value="ECO:0007669"/>
    <property type="project" value="UniProtKB-UniRule"/>
</dbReference>
<dbReference type="GO" id="GO:0015979">
    <property type="term" value="P:photosynthesis"/>
    <property type="evidence" value="ECO:0007669"/>
    <property type="project" value="UniProtKB-KW"/>
</dbReference>
<dbReference type="HAMAP" id="MF_00432">
    <property type="entry name" value="Cytb6_f_PetG"/>
    <property type="match status" value="1"/>
</dbReference>
<dbReference type="InterPro" id="IPR003683">
    <property type="entry name" value="Cyt_6/f_cplx_su5"/>
</dbReference>
<dbReference type="InterPro" id="IPR036099">
    <property type="entry name" value="Cyt_6/f_cplx_su5_sf"/>
</dbReference>
<dbReference type="NCBIfam" id="NF001907">
    <property type="entry name" value="PRK00665.1"/>
    <property type="match status" value="1"/>
</dbReference>
<dbReference type="Pfam" id="PF02529">
    <property type="entry name" value="PetG"/>
    <property type="match status" value="1"/>
</dbReference>
<dbReference type="PIRSF" id="PIRSF000034">
    <property type="entry name" value="Cyt_b6-f_V"/>
    <property type="match status" value="1"/>
</dbReference>
<dbReference type="SUPFAM" id="SSF103446">
    <property type="entry name" value="PetG subunit of the cytochrome b6f complex"/>
    <property type="match status" value="1"/>
</dbReference>
<evidence type="ECO:0000255" key="1">
    <source>
        <dbReference type="HAMAP-Rule" id="MF_00432"/>
    </source>
</evidence>
<organism>
    <name type="scientific">Nicotiana tomentosiformis</name>
    <name type="common">Tobacco</name>
    <dbReference type="NCBI Taxonomy" id="4098"/>
    <lineage>
        <taxon>Eukaryota</taxon>
        <taxon>Viridiplantae</taxon>
        <taxon>Streptophyta</taxon>
        <taxon>Embryophyta</taxon>
        <taxon>Tracheophyta</taxon>
        <taxon>Spermatophyta</taxon>
        <taxon>Magnoliopsida</taxon>
        <taxon>eudicotyledons</taxon>
        <taxon>Gunneridae</taxon>
        <taxon>Pentapetalae</taxon>
        <taxon>asterids</taxon>
        <taxon>lamiids</taxon>
        <taxon>Solanales</taxon>
        <taxon>Solanaceae</taxon>
        <taxon>Nicotianoideae</taxon>
        <taxon>Nicotianeae</taxon>
        <taxon>Nicotiana</taxon>
    </lineage>
</organism>
<feature type="chain" id="PRO_0000275498" description="Cytochrome b6-f complex subunit 5">
    <location>
        <begin position="1"/>
        <end position="37"/>
    </location>
</feature>
<feature type="transmembrane region" description="Helical" evidence="1">
    <location>
        <begin position="5"/>
        <end position="25"/>
    </location>
</feature>
<protein>
    <recommendedName>
        <fullName evidence="1">Cytochrome b6-f complex subunit 5</fullName>
    </recommendedName>
    <alternativeName>
        <fullName evidence="1">Cytochrome b6-f complex subunit PetG</fullName>
    </alternativeName>
    <alternativeName>
        <fullName evidence="1">Cytochrome b6-f complex subunit V</fullName>
    </alternativeName>
</protein>
<accession>Q33C13</accession>
<comment type="function">
    <text evidence="1">Component of the cytochrome b6-f complex, which mediates electron transfer between photosystem II (PSII) and photosystem I (PSI), cyclic electron flow around PSI, and state transitions. PetG is required for either the stability or assembly of the cytochrome b6-f complex.</text>
</comment>
<comment type="subunit">
    <text evidence="1">The 4 large subunits of the cytochrome b6-f complex are cytochrome b6, subunit IV (17 kDa polypeptide, PetD), cytochrome f and the Rieske protein, while the 4 small subunits are PetG, PetL, PetM and PetN. The complex functions as a dimer.</text>
</comment>
<comment type="subcellular location">
    <subcellularLocation>
        <location evidence="1">Plastid</location>
        <location evidence="1">Chloroplast thylakoid membrane</location>
        <topology evidence="1">Single-pass membrane protein</topology>
    </subcellularLocation>
</comment>
<comment type="similarity">
    <text evidence="1">Belongs to the PetG family.</text>
</comment>
<proteinExistence type="inferred from homology"/>
<gene>
    <name evidence="1" type="primary">petG</name>
</gene>
<name>PETG_NICTO</name>
<reference key="1">
    <citation type="journal article" date="2006" name="Mol. Genet. Genomics">
        <title>The chloroplast genome of Nicotiana sylvestris and Nicotiana tomentosiformis: complete sequencing confirms that the Nicotiana sylvestris progenitor is the maternal genome donor of Nicotiana tabacum.</title>
        <authorList>
            <person name="Yukawa M."/>
            <person name="Tsudzuki T."/>
            <person name="Sugiura M."/>
        </authorList>
    </citation>
    <scope>NUCLEOTIDE SEQUENCE [LARGE SCALE GENOMIC DNA]</scope>
</reference>
<sequence>MIEVFLFGIVLGLIPITLAGLFVTAYLQYRRGDQLDL</sequence>